<accession>P22359</accession>
<accession>Q9KTB8</accession>
<gene>
    <name evidence="1" type="primary">htpG</name>
    <name type="ordered locus">VC_0985</name>
</gene>
<proteinExistence type="evidence at transcript level"/>
<evidence type="ECO:0000255" key="1">
    <source>
        <dbReference type="HAMAP-Rule" id="MF_00505"/>
    </source>
</evidence>
<evidence type="ECO:0000305" key="2"/>
<organism>
    <name type="scientific">Vibrio cholerae serotype O1 (strain ATCC 39315 / El Tor Inaba N16961)</name>
    <dbReference type="NCBI Taxonomy" id="243277"/>
    <lineage>
        <taxon>Bacteria</taxon>
        <taxon>Pseudomonadati</taxon>
        <taxon>Pseudomonadota</taxon>
        <taxon>Gammaproteobacteria</taxon>
        <taxon>Vibrionales</taxon>
        <taxon>Vibrionaceae</taxon>
        <taxon>Vibrio</taxon>
    </lineage>
</organism>
<dbReference type="EMBL" id="AE003852">
    <property type="protein sequence ID" value="AAF94146.1"/>
    <property type="molecule type" value="Genomic_DNA"/>
</dbReference>
<dbReference type="EMBL" id="M58033">
    <property type="protein sequence ID" value="AAA27574.1"/>
    <property type="status" value="ALT_INIT"/>
    <property type="molecule type" value="Genomic_DNA"/>
</dbReference>
<dbReference type="PIR" id="A39266">
    <property type="entry name" value="A39266"/>
</dbReference>
<dbReference type="PIR" id="B82255">
    <property type="entry name" value="B82255"/>
</dbReference>
<dbReference type="RefSeq" id="NP_230631.1">
    <property type="nucleotide sequence ID" value="NC_002505.1"/>
</dbReference>
<dbReference type="RefSeq" id="WP_001889892.1">
    <property type="nucleotide sequence ID" value="NZ_LT906614.1"/>
</dbReference>
<dbReference type="SMR" id="P22359"/>
<dbReference type="STRING" id="243277.VC_0985"/>
<dbReference type="DNASU" id="2614238"/>
<dbReference type="EnsemblBacteria" id="AAF94146">
    <property type="protein sequence ID" value="AAF94146"/>
    <property type="gene ID" value="VC_0985"/>
</dbReference>
<dbReference type="KEGG" id="vch:VC_0985"/>
<dbReference type="PATRIC" id="fig|243277.26.peg.938"/>
<dbReference type="eggNOG" id="COG0326">
    <property type="taxonomic scope" value="Bacteria"/>
</dbReference>
<dbReference type="HOGENOM" id="CLU_006684_3_0_6"/>
<dbReference type="Proteomes" id="UP000000584">
    <property type="component" value="Chromosome 1"/>
</dbReference>
<dbReference type="GO" id="GO:0005829">
    <property type="term" value="C:cytosol"/>
    <property type="evidence" value="ECO:0000318"/>
    <property type="project" value="GO_Central"/>
</dbReference>
<dbReference type="GO" id="GO:0005524">
    <property type="term" value="F:ATP binding"/>
    <property type="evidence" value="ECO:0000318"/>
    <property type="project" value="GO_Central"/>
</dbReference>
<dbReference type="GO" id="GO:0016887">
    <property type="term" value="F:ATP hydrolysis activity"/>
    <property type="evidence" value="ECO:0000318"/>
    <property type="project" value="GO_Central"/>
</dbReference>
<dbReference type="GO" id="GO:0140662">
    <property type="term" value="F:ATP-dependent protein folding chaperone"/>
    <property type="evidence" value="ECO:0007669"/>
    <property type="project" value="InterPro"/>
</dbReference>
<dbReference type="GO" id="GO:0051082">
    <property type="term" value="F:unfolded protein binding"/>
    <property type="evidence" value="ECO:0000318"/>
    <property type="project" value="GO_Central"/>
</dbReference>
<dbReference type="GO" id="GO:0006974">
    <property type="term" value="P:DNA damage response"/>
    <property type="evidence" value="ECO:0000318"/>
    <property type="project" value="GO_Central"/>
</dbReference>
<dbReference type="GO" id="GO:0006457">
    <property type="term" value="P:protein folding"/>
    <property type="evidence" value="ECO:0000318"/>
    <property type="project" value="GO_Central"/>
</dbReference>
<dbReference type="GO" id="GO:0009408">
    <property type="term" value="P:response to heat"/>
    <property type="evidence" value="ECO:0000318"/>
    <property type="project" value="GO_Central"/>
</dbReference>
<dbReference type="CDD" id="cd16927">
    <property type="entry name" value="HATPase_Hsp90-like"/>
    <property type="match status" value="1"/>
</dbReference>
<dbReference type="FunFam" id="1.20.120.790:FF:000002">
    <property type="entry name" value="Molecular chaperone HtpG"/>
    <property type="match status" value="1"/>
</dbReference>
<dbReference type="FunFam" id="3.30.230.80:FF:000002">
    <property type="entry name" value="Molecular chaperone HtpG"/>
    <property type="match status" value="1"/>
</dbReference>
<dbReference type="FunFam" id="3.30.565.10:FF:000009">
    <property type="entry name" value="Molecular chaperone HtpG"/>
    <property type="match status" value="1"/>
</dbReference>
<dbReference type="FunFam" id="3.40.50.11260:FF:000002">
    <property type="entry name" value="Molecular chaperone HtpG"/>
    <property type="match status" value="1"/>
</dbReference>
<dbReference type="Gene3D" id="3.30.230.80">
    <property type="match status" value="1"/>
</dbReference>
<dbReference type="Gene3D" id="3.40.50.11260">
    <property type="match status" value="1"/>
</dbReference>
<dbReference type="Gene3D" id="1.20.120.790">
    <property type="entry name" value="Heat shock protein 90, C-terminal domain"/>
    <property type="match status" value="1"/>
</dbReference>
<dbReference type="Gene3D" id="3.30.565.10">
    <property type="entry name" value="Histidine kinase-like ATPase, C-terminal domain"/>
    <property type="match status" value="1"/>
</dbReference>
<dbReference type="HAMAP" id="MF_00505">
    <property type="entry name" value="HSP90"/>
    <property type="match status" value="1"/>
</dbReference>
<dbReference type="InterPro" id="IPR036890">
    <property type="entry name" value="HATPase_C_sf"/>
</dbReference>
<dbReference type="InterPro" id="IPR019805">
    <property type="entry name" value="Heat_shock_protein_90_CS"/>
</dbReference>
<dbReference type="InterPro" id="IPR037196">
    <property type="entry name" value="HSP90_C"/>
</dbReference>
<dbReference type="InterPro" id="IPR001404">
    <property type="entry name" value="Hsp90_fam"/>
</dbReference>
<dbReference type="InterPro" id="IPR020575">
    <property type="entry name" value="Hsp90_N"/>
</dbReference>
<dbReference type="InterPro" id="IPR020568">
    <property type="entry name" value="Ribosomal_Su5_D2-typ_SF"/>
</dbReference>
<dbReference type="NCBIfam" id="NF003555">
    <property type="entry name" value="PRK05218.1"/>
    <property type="match status" value="1"/>
</dbReference>
<dbReference type="PANTHER" id="PTHR11528">
    <property type="entry name" value="HEAT SHOCK PROTEIN 90 FAMILY MEMBER"/>
    <property type="match status" value="1"/>
</dbReference>
<dbReference type="Pfam" id="PF13589">
    <property type="entry name" value="HATPase_c_3"/>
    <property type="match status" value="1"/>
</dbReference>
<dbReference type="Pfam" id="PF00183">
    <property type="entry name" value="HSP90"/>
    <property type="match status" value="1"/>
</dbReference>
<dbReference type="PIRSF" id="PIRSF002583">
    <property type="entry name" value="Hsp90"/>
    <property type="match status" value="1"/>
</dbReference>
<dbReference type="PRINTS" id="PR00775">
    <property type="entry name" value="HEATSHOCK90"/>
</dbReference>
<dbReference type="SMART" id="SM00387">
    <property type="entry name" value="HATPase_c"/>
    <property type="match status" value="1"/>
</dbReference>
<dbReference type="SUPFAM" id="SSF55874">
    <property type="entry name" value="ATPase domain of HSP90 chaperone/DNA topoisomerase II/histidine kinase"/>
    <property type="match status" value="1"/>
</dbReference>
<dbReference type="SUPFAM" id="SSF110942">
    <property type="entry name" value="HSP90 C-terminal domain"/>
    <property type="match status" value="1"/>
</dbReference>
<dbReference type="SUPFAM" id="SSF54211">
    <property type="entry name" value="Ribosomal protein S5 domain 2-like"/>
    <property type="match status" value="1"/>
</dbReference>
<dbReference type="PROSITE" id="PS00298">
    <property type="entry name" value="HSP90"/>
    <property type="match status" value="1"/>
</dbReference>
<feature type="chain" id="PRO_0000063019" description="Chaperone protein HtpG">
    <location>
        <begin position="1"/>
        <end position="635"/>
    </location>
</feature>
<feature type="region of interest" description="A; substrate-binding" evidence="1">
    <location>
        <begin position="1"/>
        <end position="344"/>
    </location>
</feature>
<feature type="region of interest" description="B" evidence="1">
    <location>
        <begin position="345"/>
        <end position="561"/>
    </location>
</feature>
<feature type="region of interest" description="C" evidence="1">
    <location>
        <begin position="562"/>
        <end position="635"/>
    </location>
</feature>
<keyword id="KW-0067">ATP-binding</keyword>
<keyword id="KW-0143">Chaperone</keyword>
<keyword id="KW-0963">Cytoplasm</keyword>
<keyword id="KW-0547">Nucleotide-binding</keyword>
<keyword id="KW-1185">Reference proteome</keyword>
<keyword id="KW-0346">Stress response</keyword>
<sequence>MSETATTNKETRGFQSEVKQLLHLMIHSLYSNKEIFLRELISNASDAVDKLRFQALSHPDLYQGDAELGVKLSFDKDKNTLTISDNGIGMTRDEVIENLGTIAKSGTAEFFSKLSQEQSKNSQLIGQFGVGFYSAFIVADAVTVRTRAAGSAPADAVQWYSKGEGEYTVETINKESRGTDIILHLREEGKEFLSEWRLRDVISKYSDHIGIPVYIQTSVMDEEGKATEETKWEQINKAQALWTRAKSEVTDEEYKEFYKHVSHDFADPLVWSHNKVEGKNDYTSLLYIPAKAPWDLFNREHKHGLKLYVQRVFIMDDAAQFMPSYLRFVRGLIDSNDLPLNVSREILQDNKITQSLRQACTKRVLTMLERMASNDADNYQKFWKEFGLVMKEGPAEDFANREKIASLLRFASTHIDSAEQTISLASYVERMKEGQDKIYYLTADSYTAAKNSPHLEQFKSKGIEVILMFDRIDEWLMNYLPEFEGKAFQSITKAGLDLSQFEDEAEKEKHKETEEQFKSVVERLKGYLGSRVKEVRTTFKLANTPAVVVTDDYEMGTQMAKLLAAAGQPVPEVKYILEVNPEHALVKRMADEADEQTFGRWAEVLLGQAMLAERGSMEDPSQFLGAVNQLLAPSH</sequence>
<protein>
    <recommendedName>
        <fullName evidence="1">Chaperone protein HtpG</fullName>
    </recommendedName>
    <alternativeName>
        <fullName evidence="1">Heat shock protein HtpG</fullName>
    </alternativeName>
    <alternativeName>
        <fullName evidence="1">High temperature protein G</fullName>
    </alternativeName>
</protein>
<comment type="function">
    <text evidence="1">Molecular chaperone. Has ATPase activity.</text>
</comment>
<comment type="subunit">
    <text evidence="1">Homodimer.</text>
</comment>
<comment type="subcellular location">
    <subcellularLocation>
        <location evidence="1">Cytoplasm</location>
    </subcellularLocation>
</comment>
<comment type="induction">
    <text>By increase in temperature.</text>
</comment>
<comment type="similarity">
    <text evidence="1">Belongs to the heat shock protein 90 family.</text>
</comment>
<comment type="sequence caution" evidence="2">
    <conflict type="erroneous initiation">
        <sequence resource="EMBL-CDS" id="AAA27574"/>
    </conflict>
</comment>
<reference key="1">
    <citation type="journal article" date="2000" name="Nature">
        <title>DNA sequence of both chromosomes of the cholera pathogen Vibrio cholerae.</title>
        <authorList>
            <person name="Heidelberg J.F."/>
            <person name="Eisen J.A."/>
            <person name="Nelson W.C."/>
            <person name="Clayton R.A."/>
            <person name="Gwinn M.L."/>
            <person name="Dodson R.J."/>
            <person name="Haft D.H."/>
            <person name="Hickey E.K."/>
            <person name="Peterson J.D."/>
            <person name="Umayam L.A."/>
            <person name="Gill S.R."/>
            <person name="Nelson K.E."/>
            <person name="Read T.D."/>
            <person name="Tettelin H."/>
            <person name="Richardson D.L."/>
            <person name="Ermolaeva M.D."/>
            <person name="Vamathevan J.J."/>
            <person name="Bass S."/>
            <person name="Qin H."/>
            <person name="Dragoi I."/>
            <person name="Sellers P."/>
            <person name="McDonald L.A."/>
            <person name="Utterback T.R."/>
            <person name="Fleischmann R.D."/>
            <person name="Nierman W.C."/>
            <person name="White O."/>
            <person name="Salzberg S.L."/>
            <person name="Smith H.O."/>
            <person name="Colwell R.R."/>
            <person name="Mekalanos J.J."/>
            <person name="Venter J.C."/>
            <person name="Fraser C.M."/>
        </authorList>
    </citation>
    <scope>NUCLEOTIDE SEQUENCE [LARGE SCALE GENOMIC DNA]</scope>
    <source>
        <strain>ATCC 39315 / El Tor Inaba N16961</strain>
    </source>
</reference>
<reference key="2">
    <citation type="journal article" date="1990" name="Proc. Natl. Acad. Sci. U.S.A.">
        <title>Expression of ToxR, the transcriptional activator of the virulence factors in Vibrio cholerae, is modulated by the heat shock response.</title>
        <authorList>
            <person name="Parsot C."/>
            <person name="Mekalanos J.J."/>
        </authorList>
    </citation>
    <scope>NUCLEOTIDE SEQUENCE [GENOMIC DNA] OF 1-110</scope>
    <source>
        <strain>ATCC 55056 / El Tor Ogawa E7946</strain>
    </source>
</reference>
<name>HTPG_VIBCH</name>